<reference key="1">
    <citation type="journal article" date="1992" name="Nucleic Acids Res.">
        <title>Identification of the CTAG-recognizing restriction-modification systems MthZI and MthFI from Methanobacterium thermoformicicum and characterization of the plasmid-encoded mthZIM gene.</title>
        <authorList>
            <person name="Noelling J."/>
            <person name="de Vos W.M."/>
        </authorList>
    </citation>
    <scope>NUCLEOTIDE SEQUENCE [GENOMIC DNA]</scope>
    <scope>FUNCTION</scope>
    <scope>CATALYTIC ACTIVITY</scope>
    <source>
        <strain>DSM 3720 / Z-245</strain>
    </source>
</reference>
<reference key="2">
    <citation type="journal article" date="1992" name="Nucleic Acids Res.">
        <title>Modular organization of related Archaeal plasmids encoding different restriction-modification systems in Methanobacterium thermoformicicum.</title>
        <authorList>
            <person name="Noelling J."/>
            <person name="van Eeden F.J.M."/>
            <person name="Eggen R.I.L."/>
            <person name="de Vos W.M."/>
        </authorList>
    </citation>
    <scope>NUCLEOTIDE SEQUENCE [GENOMIC DNA]</scope>
    <source>
        <strain>DSM 3720 / Z-245</strain>
    </source>
</reference>
<reference key="3">
    <citation type="journal article" date="2003" name="Nucleic Acids Res.">
        <title>A nomenclature for restriction enzymes, DNA methyltransferases, homing endonucleases and their genes.</title>
        <authorList>
            <person name="Roberts R.J."/>
            <person name="Belfort M."/>
            <person name="Bestor T."/>
            <person name="Bhagwat A.S."/>
            <person name="Bickle T.A."/>
            <person name="Bitinaite J."/>
            <person name="Blumenthal R.M."/>
            <person name="Degtyarev S.K."/>
            <person name="Dryden D.T."/>
            <person name="Dybvig K."/>
            <person name="Firman K."/>
            <person name="Gromova E.S."/>
            <person name="Gumport R.I."/>
            <person name="Halford S.E."/>
            <person name="Hattman S."/>
            <person name="Heitman J."/>
            <person name="Hornby D.P."/>
            <person name="Janulaitis A."/>
            <person name="Jeltsch A."/>
            <person name="Josephsen J."/>
            <person name="Kiss A."/>
            <person name="Klaenhammer T.R."/>
            <person name="Kobayashi I."/>
            <person name="Kong H."/>
            <person name="Krueger D.H."/>
            <person name="Lacks S."/>
            <person name="Marinus M.G."/>
            <person name="Miyahara M."/>
            <person name="Morgan R.D."/>
            <person name="Murray N.E."/>
            <person name="Nagaraja V."/>
            <person name="Piekarowicz A."/>
            <person name="Pingoud A."/>
            <person name="Raleigh E."/>
            <person name="Rao D.N."/>
            <person name="Reich N."/>
            <person name="Repin V.E."/>
            <person name="Selker E.U."/>
            <person name="Shaw P.C."/>
            <person name="Stein D.C."/>
            <person name="Stoddard B.L."/>
            <person name="Szybalski W."/>
            <person name="Trautner T.A."/>
            <person name="Van Etten J.L."/>
            <person name="Vitor J.M."/>
            <person name="Wilson G.G."/>
            <person name="Xu S.Y."/>
        </authorList>
    </citation>
    <scope>NOMENCLATURE</scope>
    <scope>SUBTYPE</scope>
</reference>
<gene>
    <name evidence="4" type="primary">mthZIM</name>
</gene>
<keyword id="KW-0238">DNA-binding</keyword>
<keyword id="KW-0489">Methyltransferase</keyword>
<keyword id="KW-0614">Plasmid</keyword>
<keyword id="KW-0680">Restriction system</keyword>
<keyword id="KW-0949">S-adenosyl-L-methionine</keyword>
<keyword id="KW-0808">Transferase</keyword>
<comment type="function">
    <text evidence="1 3">A beta subtype methylase that recognizes the double-stranded sequence 5'-CTAG-3', methylates C-1 on both strands, and protects the DNA from cleavage by the MthZI endonuclease.</text>
</comment>
<comment type="catalytic activity">
    <reaction evidence="1">
        <text>a 2'-deoxycytidine in DNA + S-adenosyl-L-methionine = an N(4)-methyl-2'-deoxycytidine in DNA + S-adenosyl-L-homocysteine + H(+)</text>
        <dbReference type="Rhea" id="RHEA:16857"/>
        <dbReference type="Rhea" id="RHEA-COMP:11369"/>
        <dbReference type="Rhea" id="RHEA-COMP:13674"/>
        <dbReference type="ChEBI" id="CHEBI:15378"/>
        <dbReference type="ChEBI" id="CHEBI:57856"/>
        <dbReference type="ChEBI" id="CHEBI:59789"/>
        <dbReference type="ChEBI" id="CHEBI:85452"/>
        <dbReference type="ChEBI" id="CHEBI:137933"/>
        <dbReference type="EC" id="2.1.1.113"/>
    </reaction>
</comment>
<comment type="similarity">
    <text evidence="5">Belongs to the N(4)/N(6)-methyltransferase family. N(4) subfamily.</text>
</comment>
<geneLocation type="plasmid">
    <name>pFZ1</name>
</geneLocation>
<organism>
    <name type="scientific">Methanothermobacter thermautotrophicus</name>
    <name type="common">Methanobacterium thermoformicicum</name>
    <dbReference type="NCBI Taxonomy" id="145262"/>
    <lineage>
        <taxon>Archaea</taxon>
        <taxon>Methanobacteriati</taxon>
        <taxon>Methanobacteriota</taxon>
        <taxon>Methanomada group</taxon>
        <taxon>Methanobacteria</taxon>
        <taxon>Methanobacteriales</taxon>
        <taxon>Methanobacteriaceae</taxon>
        <taxon>Methanothermobacter</taxon>
    </lineage>
</organism>
<proteinExistence type="evidence at protein level"/>
<name>MTHZ_METTF</name>
<feature type="chain" id="PRO_0000087928" description="Type II methyltransferase M.MthZI">
    <location>
        <begin position="1"/>
        <end position="355"/>
    </location>
</feature>
<evidence type="ECO:0000269" key="1">
    <source>
    </source>
</evidence>
<evidence type="ECO:0000303" key="2">
    <source>
    </source>
</evidence>
<evidence type="ECO:0000303" key="3">
    <source>
    </source>
</evidence>
<evidence type="ECO:0000303" key="4">
    <source>
    </source>
</evidence>
<evidence type="ECO:0000305" key="5"/>
<protein>
    <recommendedName>
        <fullName evidence="2">Type II methyltransferase M.MthZI</fullName>
        <shortName evidence="4">M.MthZI</shortName>
        <ecNumber evidence="1">2.1.1.113</ecNumber>
    </recommendedName>
    <alternativeName>
        <fullName>Modification methylase MthZI</fullName>
    </alternativeName>
    <alternativeName>
        <fullName>N-4 cytosine-specific methyltransferase MthZI</fullName>
    </alternativeName>
</protein>
<sequence length="355" mass="42477">MKTTHRIYFKNSADMNELKDKSINLVVTSPPYPMVEIWDRLFSELNPKIEETLIDEEDGLRSYNLMHEELEKVWHEVDRVTAPGGVVIINIGDATRKIGKKFQLYPNHVRTIDFFFDRGYQVLPFIIWRKQSNKPTKFMGSGMLPPNAYVTHEHEYILIFRKEGPRQFKTEEERKLRRESAYFWEERNQWFSDVWTDLTGVSQRLNHKNLRKRAAAYPFELAYRLINMYSIMGDWVLDPFLGTGTTMIAAACAGRNSIGYELDHNFKDLIESRINETLKLSNEIVMRRINDHIEFIREKNGKYYSENYKFKVTTRQEQDIRLYYPRTYKKIKNNEFEFFYQEVNPKKERQSKLNI</sequence>
<accession>P29568</accession>
<dbReference type="EC" id="2.1.1.113" evidence="1"/>
<dbReference type="EMBL" id="X67212">
    <property type="protein sequence ID" value="CAA47651.1"/>
    <property type="molecule type" value="Genomic_DNA"/>
</dbReference>
<dbReference type="EMBL" id="X68367">
    <property type="protein sequence ID" value="CAA48447.1"/>
    <property type="molecule type" value="Genomic_DNA"/>
</dbReference>
<dbReference type="PIR" id="S30315">
    <property type="entry name" value="S30315"/>
</dbReference>
<dbReference type="RefSeq" id="NP_039775.1">
    <property type="nucleotide sequence ID" value="NC_001337.1"/>
</dbReference>
<dbReference type="RefSeq" id="WP_010889862.1">
    <property type="nucleotide sequence ID" value="NC_001337.1"/>
</dbReference>
<dbReference type="SMR" id="P29568"/>
<dbReference type="REBASE" id="3540">
    <property type="entry name" value="M.MthZI"/>
</dbReference>
<dbReference type="GeneID" id="24855017"/>
<dbReference type="BRENDA" id="2.1.1.113">
    <property type="organism ID" value="3256"/>
</dbReference>
<dbReference type="PRO" id="PR:P29568"/>
<dbReference type="GO" id="GO:0005737">
    <property type="term" value="C:cytoplasm"/>
    <property type="evidence" value="ECO:0007669"/>
    <property type="project" value="TreeGrafter"/>
</dbReference>
<dbReference type="GO" id="GO:0003677">
    <property type="term" value="F:DNA binding"/>
    <property type="evidence" value="ECO:0007669"/>
    <property type="project" value="UniProtKB-KW"/>
</dbReference>
<dbReference type="GO" id="GO:0008170">
    <property type="term" value="F:N-methyltransferase activity"/>
    <property type="evidence" value="ECO:0007669"/>
    <property type="project" value="InterPro"/>
</dbReference>
<dbReference type="GO" id="GO:0009007">
    <property type="term" value="F:site-specific DNA-methyltransferase (adenine-specific) activity"/>
    <property type="evidence" value="ECO:0007669"/>
    <property type="project" value="TreeGrafter"/>
</dbReference>
<dbReference type="GO" id="GO:0015667">
    <property type="term" value="F:site-specific DNA-methyltransferase (cytosine-N4-specific) activity"/>
    <property type="evidence" value="ECO:0007669"/>
    <property type="project" value="UniProtKB-EC"/>
</dbReference>
<dbReference type="GO" id="GO:0009307">
    <property type="term" value="P:DNA restriction-modification system"/>
    <property type="evidence" value="ECO:0007669"/>
    <property type="project" value="UniProtKB-KW"/>
</dbReference>
<dbReference type="GO" id="GO:0032259">
    <property type="term" value="P:methylation"/>
    <property type="evidence" value="ECO:0007669"/>
    <property type="project" value="UniProtKB-KW"/>
</dbReference>
<dbReference type="Gene3D" id="3.40.50.150">
    <property type="entry name" value="Vaccinia Virus protein VP39"/>
    <property type="match status" value="1"/>
</dbReference>
<dbReference type="InterPro" id="IPR002941">
    <property type="entry name" value="DNA_methylase_N4/N6"/>
</dbReference>
<dbReference type="InterPro" id="IPR017985">
    <property type="entry name" value="MeTrfase_CN4_CS"/>
</dbReference>
<dbReference type="InterPro" id="IPR001091">
    <property type="entry name" value="RM_Methyltransferase"/>
</dbReference>
<dbReference type="InterPro" id="IPR029063">
    <property type="entry name" value="SAM-dependent_MTases_sf"/>
</dbReference>
<dbReference type="PANTHER" id="PTHR13370">
    <property type="entry name" value="RNA METHYLASE-RELATED"/>
    <property type="match status" value="1"/>
</dbReference>
<dbReference type="PANTHER" id="PTHR13370:SF3">
    <property type="entry name" value="TRNA (GUANINE(10)-N2)-METHYLTRANSFERASE HOMOLOG"/>
    <property type="match status" value="1"/>
</dbReference>
<dbReference type="Pfam" id="PF01555">
    <property type="entry name" value="N6_N4_Mtase"/>
    <property type="match status" value="1"/>
</dbReference>
<dbReference type="PRINTS" id="PR00508">
    <property type="entry name" value="S21N4MTFRASE"/>
</dbReference>
<dbReference type="SUPFAM" id="SSF53335">
    <property type="entry name" value="S-adenosyl-L-methionine-dependent methyltransferases"/>
    <property type="match status" value="1"/>
</dbReference>
<dbReference type="PROSITE" id="PS00093">
    <property type="entry name" value="N4_MTASE"/>
    <property type="match status" value="1"/>
</dbReference>